<sequence>MSPDHGELLYEGKAKRIYATDHPDQVLVEYKNDATAFNAQKKAQLADKGRLNCQISARLFELLEGQGVPSHYLGLAGDTWMLVQRVEVIPLEVVLRNIATGSLCRQTPIAEGTPINPALLDLYYKDDDLGDPLLTEARVRLLGLVDDARQSAIEQLARRINGVLQPFFDGLELQLVDFKLELGLNKAGELLLADEISPDTCRFWDQRSSDTNDRILDKDRFRKDLGGVMEAYGEVLKRVHTACPNPRNCL</sequence>
<feature type="chain" id="PRO_0000100889" description="Phosphoribosylaminoimidazole-succinocarboxamide synthase">
    <location>
        <begin position="1"/>
        <end position="250"/>
    </location>
</feature>
<comment type="catalytic activity">
    <reaction evidence="1">
        <text>5-amino-1-(5-phospho-D-ribosyl)imidazole-4-carboxylate + L-aspartate + ATP = (2S)-2-[5-amino-1-(5-phospho-beta-D-ribosyl)imidazole-4-carboxamido]succinate + ADP + phosphate + 2 H(+)</text>
        <dbReference type="Rhea" id="RHEA:22628"/>
        <dbReference type="ChEBI" id="CHEBI:15378"/>
        <dbReference type="ChEBI" id="CHEBI:29991"/>
        <dbReference type="ChEBI" id="CHEBI:30616"/>
        <dbReference type="ChEBI" id="CHEBI:43474"/>
        <dbReference type="ChEBI" id="CHEBI:58443"/>
        <dbReference type="ChEBI" id="CHEBI:77657"/>
        <dbReference type="ChEBI" id="CHEBI:456216"/>
        <dbReference type="EC" id="6.3.2.6"/>
    </reaction>
</comment>
<comment type="pathway">
    <text evidence="1">Purine metabolism; IMP biosynthesis via de novo pathway; 5-amino-1-(5-phospho-D-ribosyl)imidazole-4-carboxamide from 5-amino-1-(5-phospho-D-ribosyl)imidazole-4-carboxylate: step 1/2.</text>
</comment>
<comment type="similarity">
    <text evidence="1">Belongs to the SAICAR synthetase family.</text>
</comment>
<keyword id="KW-0067">ATP-binding</keyword>
<keyword id="KW-0436">Ligase</keyword>
<keyword id="KW-0547">Nucleotide-binding</keyword>
<keyword id="KW-0658">Purine biosynthesis</keyword>
<dbReference type="EC" id="6.3.2.6" evidence="1"/>
<dbReference type="EMBL" id="BX569690">
    <property type="protein sequence ID" value="CAE07069.1"/>
    <property type="molecule type" value="Genomic_DNA"/>
</dbReference>
<dbReference type="RefSeq" id="WP_011127423.1">
    <property type="nucleotide sequence ID" value="NC_005070.1"/>
</dbReference>
<dbReference type="SMR" id="Q7U8Q9"/>
<dbReference type="STRING" id="84588.SYNW0554"/>
<dbReference type="KEGG" id="syw:SYNW0554"/>
<dbReference type="eggNOG" id="COG0152">
    <property type="taxonomic scope" value="Bacteria"/>
</dbReference>
<dbReference type="HOGENOM" id="CLU_061495_2_0_3"/>
<dbReference type="UniPathway" id="UPA00074">
    <property type="reaction ID" value="UER00131"/>
</dbReference>
<dbReference type="Proteomes" id="UP000001422">
    <property type="component" value="Chromosome"/>
</dbReference>
<dbReference type="GO" id="GO:0005524">
    <property type="term" value="F:ATP binding"/>
    <property type="evidence" value="ECO:0007669"/>
    <property type="project" value="UniProtKB-KW"/>
</dbReference>
<dbReference type="GO" id="GO:0004639">
    <property type="term" value="F:phosphoribosylaminoimidazolesuccinocarboxamide synthase activity"/>
    <property type="evidence" value="ECO:0007669"/>
    <property type="project" value="UniProtKB-UniRule"/>
</dbReference>
<dbReference type="GO" id="GO:0006189">
    <property type="term" value="P:'de novo' IMP biosynthetic process"/>
    <property type="evidence" value="ECO:0007669"/>
    <property type="project" value="UniProtKB-UniRule"/>
</dbReference>
<dbReference type="GO" id="GO:0009236">
    <property type="term" value="P:cobalamin biosynthetic process"/>
    <property type="evidence" value="ECO:0007669"/>
    <property type="project" value="InterPro"/>
</dbReference>
<dbReference type="CDD" id="cd01415">
    <property type="entry name" value="SAICAR_synt_PurC"/>
    <property type="match status" value="1"/>
</dbReference>
<dbReference type="FunFam" id="3.30.470.20:FF:000006">
    <property type="entry name" value="Phosphoribosylaminoimidazole-succinocarboxamide synthase"/>
    <property type="match status" value="1"/>
</dbReference>
<dbReference type="Gene3D" id="3.30.470.20">
    <property type="entry name" value="ATP-grasp fold, B domain"/>
    <property type="match status" value="1"/>
</dbReference>
<dbReference type="Gene3D" id="3.30.200.20">
    <property type="entry name" value="Phosphorylase Kinase, domain 1"/>
    <property type="match status" value="1"/>
</dbReference>
<dbReference type="HAMAP" id="MF_00137">
    <property type="entry name" value="SAICAR_synth"/>
    <property type="match status" value="1"/>
</dbReference>
<dbReference type="InterPro" id="IPR028923">
    <property type="entry name" value="SAICAR_synt/ADE2_N"/>
</dbReference>
<dbReference type="InterPro" id="IPR033934">
    <property type="entry name" value="SAICAR_synt_PurC"/>
</dbReference>
<dbReference type="InterPro" id="IPR001636">
    <property type="entry name" value="SAICAR_synth"/>
</dbReference>
<dbReference type="InterPro" id="IPR050089">
    <property type="entry name" value="SAICAR_synthetase"/>
</dbReference>
<dbReference type="InterPro" id="IPR018236">
    <property type="entry name" value="SAICAR_synthetase_CS"/>
</dbReference>
<dbReference type="NCBIfam" id="TIGR00081">
    <property type="entry name" value="purC"/>
    <property type="match status" value="1"/>
</dbReference>
<dbReference type="PANTHER" id="PTHR43599">
    <property type="entry name" value="MULTIFUNCTIONAL PROTEIN ADE2"/>
    <property type="match status" value="1"/>
</dbReference>
<dbReference type="PANTHER" id="PTHR43599:SF3">
    <property type="entry name" value="SI:DKEY-6E2.2"/>
    <property type="match status" value="1"/>
</dbReference>
<dbReference type="Pfam" id="PF01259">
    <property type="entry name" value="SAICAR_synt"/>
    <property type="match status" value="1"/>
</dbReference>
<dbReference type="SUPFAM" id="SSF56104">
    <property type="entry name" value="SAICAR synthase-like"/>
    <property type="match status" value="1"/>
</dbReference>
<dbReference type="PROSITE" id="PS01057">
    <property type="entry name" value="SAICAR_SYNTHETASE_1"/>
    <property type="match status" value="1"/>
</dbReference>
<gene>
    <name evidence="1" type="primary">purC</name>
    <name type="ordered locus">SYNW0554</name>
</gene>
<evidence type="ECO:0000255" key="1">
    <source>
        <dbReference type="HAMAP-Rule" id="MF_00137"/>
    </source>
</evidence>
<protein>
    <recommendedName>
        <fullName evidence="1">Phosphoribosylaminoimidazole-succinocarboxamide synthase</fullName>
        <ecNumber evidence="1">6.3.2.6</ecNumber>
    </recommendedName>
    <alternativeName>
        <fullName evidence="1">SAICAR synthetase</fullName>
    </alternativeName>
</protein>
<proteinExistence type="inferred from homology"/>
<accession>Q7U8Q9</accession>
<name>PUR7_PARMW</name>
<organism>
    <name type="scientific">Parasynechococcus marenigrum (strain WH8102)</name>
    <dbReference type="NCBI Taxonomy" id="84588"/>
    <lineage>
        <taxon>Bacteria</taxon>
        <taxon>Bacillati</taxon>
        <taxon>Cyanobacteriota</taxon>
        <taxon>Cyanophyceae</taxon>
        <taxon>Synechococcales</taxon>
        <taxon>Prochlorococcaceae</taxon>
        <taxon>Parasynechococcus</taxon>
        <taxon>Parasynechococcus marenigrum</taxon>
    </lineage>
</organism>
<reference key="1">
    <citation type="journal article" date="2003" name="Nature">
        <title>The genome of a motile marine Synechococcus.</title>
        <authorList>
            <person name="Palenik B."/>
            <person name="Brahamsha B."/>
            <person name="Larimer F.W."/>
            <person name="Land M.L."/>
            <person name="Hauser L."/>
            <person name="Chain P."/>
            <person name="Lamerdin J.E."/>
            <person name="Regala W."/>
            <person name="Allen E.E."/>
            <person name="McCarren J."/>
            <person name="Paulsen I.T."/>
            <person name="Dufresne A."/>
            <person name="Partensky F."/>
            <person name="Webb E.A."/>
            <person name="Waterbury J."/>
        </authorList>
    </citation>
    <scope>NUCLEOTIDE SEQUENCE [LARGE SCALE GENOMIC DNA]</scope>
    <source>
        <strain>WH8102</strain>
    </source>
</reference>